<feature type="chain" id="PRO_0000332697" description="Transcriptional repressor RcnR">
    <location>
        <begin position="1"/>
        <end position="90"/>
    </location>
</feature>
<gene>
    <name type="primary">rcnR</name>
    <name type="ordered locus">EcHS_A2241</name>
</gene>
<comment type="function">
    <text evidence="1">Repressor of rcnA expression. Acts by binding specifically to the rcnA promoter in the absence of nickel and cobalt. In the presence of one of these metals, it has a weaker affinity for rcnA promoter (By similarity).</text>
</comment>
<comment type="subcellular location">
    <subcellularLocation>
        <location evidence="2">Cytoplasm</location>
    </subcellularLocation>
</comment>
<comment type="similarity">
    <text evidence="2">Belongs to the FrmR/RcnR family.</text>
</comment>
<accession>A8A1X0</accession>
<organism>
    <name type="scientific">Escherichia coli O9:H4 (strain HS)</name>
    <dbReference type="NCBI Taxonomy" id="331112"/>
    <lineage>
        <taxon>Bacteria</taxon>
        <taxon>Pseudomonadati</taxon>
        <taxon>Pseudomonadota</taxon>
        <taxon>Gammaproteobacteria</taxon>
        <taxon>Enterobacterales</taxon>
        <taxon>Enterobacteriaceae</taxon>
        <taxon>Escherichia</taxon>
    </lineage>
</organism>
<protein>
    <recommendedName>
        <fullName>Transcriptional repressor RcnR</fullName>
    </recommendedName>
</protein>
<sequence length="90" mass="10134">MSHTIRDKQKLKARASKIQGQVVALKKMLDEPHECAAVLQQIAAIRGAVNGLMREVIKGHLTEHIVHQGDELKREEDLDVVLKVLDSYIK</sequence>
<keyword id="KW-0963">Cytoplasm</keyword>
<keyword id="KW-0238">DNA-binding</keyword>
<keyword id="KW-0678">Repressor</keyword>
<keyword id="KW-0804">Transcription</keyword>
<keyword id="KW-0805">Transcription regulation</keyword>
<evidence type="ECO:0000250" key="1"/>
<evidence type="ECO:0000305" key="2"/>
<proteinExistence type="inferred from homology"/>
<name>RCNR_ECOHS</name>
<reference key="1">
    <citation type="journal article" date="2008" name="J. Bacteriol.">
        <title>The pangenome structure of Escherichia coli: comparative genomic analysis of E. coli commensal and pathogenic isolates.</title>
        <authorList>
            <person name="Rasko D.A."/>
            <person name="Rosovitz M.J."/>
            <person name="Myers G.S.A."/>
            <person name="Mongodin E.F."/>
            <person name="Fricke W.F."/>
            <person name="Gajer P."/>
            <person name="Crabtree J."/>
            <person name="Sebaihia M."/>
            <person name="Thomson N.R."/>
            <person name="Chaudhuri R."/>
            <person name="Henderson I.R."/>
            <person name="Sperandio V."/>
            <person name="Ravel J."/>
        </authorList>
    </citation>
    <scope>NUCLEOTIDE SEQUENCE [LARGE SCALE GENOMIC DNA]</scope>
    <source>
        <strain>HS</strain>
    </source>
</reference>
<dbReference type="EMBL" id="CP000802">
    <property type="protein sequence ID" value="ABV06524.1"/>
    <property type="molecule type" value="Genomic_DNA"/>
</dbReference>
<dbReference type="RefSeq" id="WP_000019944.1">
    <property type="nucleotide sequence ID" value="NC_009800.1"/>
</dbReference>
<dbReference type="SMR" id="A8A1X0"/>
<dbReference type="GeneID" id="93775089"/>
<dbReference type="KEGG" id="ecx:EcHS_A2241"/>
<dbReference type="HOGENOM" id="CLU_130332_3_0_6"/>
<dbReference type="GO" id="GO:0005737">
    <property type="term" value="C:cytoplasm"/>
    <property type="evidence" value="ECO:0007669"/>
    <property type="project" value="UniProtKB-SubCell"/>
</dbReference>
<dbReference type="GO" id="GO:0003677">
    <property type="term" value="F:DNA binding"/>
    <property type="evidence" value="ECO:0007669"/>
    <property type="project" value="UniProtKB-KW"/>
</dbReference>
<dbReference type="GO" id="GO:0046872">
    <property type="term" value="F:metal ion binding"/>
    <property type="evidence" value="ECO:0007669"/>
    <property type="project" value="InterPro"/>
</dbReference>
<dbReference type="GO" id="GO:0045892">
    <property type="term" value="P:negative regulation of DNA-templated transcription"/>
    <property type="evidence" value="ECO:0007669"/>
    <property type="project" value="UniProtKB-ARBA"/>
</dbReference>
<dbReference type="CDD" id="cd10153">
    <property type="entry name" value="RcnR-FrmR-like_DUF156"/>
    <property type="match status" value="1"/>
</dbReference>
<dbReference type="FunFam" id="1.20.58.1000:FF:000001">
    <property type="entry name" value="Transcriptional repressor RcnR"/>
    <property type="match status" value="1"/>
</dbReference>
<dbReference type="Gene3D" id="1.20.58.1000">
    <property type="entry name" value="Metal-sensitive repressor, helix protomer"/>
    <property type="match status" value="1"/>
</dbReference>
<dbReference type="InterPro" id="IPR003735">
    <property type="entry name" value="Metal_Tscrpt_repr"/>
</dbReference>
<dbReference type="InterPro" id="IPR038390">
    <property type="entry name" value="Metal_Tscrpt_repr_sf"/>
</dbReference>
<dbReference type="NCBIfam" id="NF011613">
    <property type="entry name" value="PRK15039.1"/>
    <property type="match status" value="1"/>
</dbReference>
<dbReference type="PANTHER" id="PTHR33677">
    <property type="entry name" value="TRANSCRIPTIONAL REPRESSOR FRMR-RELATED"/>
    <property type="match status" value="1"/>
</dbReference>
<dbReference type="PANTHER" id="PTHR33677:SF1">
    <property type="entry name" value="TRANSCRIPTIONAL REPRESSOR RCNR"/>
    <property type="match status" value="1"/>
</dbReference>
<dbReference type="Pfam" id="PF02583">
    <property type="entry name" value="Trns_repr_metal"/>
    <property type="match status" value="1"/>
</dbReference>